<keyword id="KW-0029">Amino-acid transport</keyword>
<keyword id="KW-0050">Antiport</keyword>
<keyword id="KW-0997">Cell inner membrane</keyword>
<keyword id="KW-1003">Cell membrane</keyword>
<keyword id="KW-0472">Membrane</keyword>
<keyword id="KW-1185">Reference proteome</keyword>
<keyword id="KW-0769">Symport</keyword>
<keyword id="KW-0812">Transmembrane</keyword>
<keyword id="KW-1133">Transmembrane helix</keyword>
<keyword id="KW-0813">Transport</keyword>
<reference key="1">
    <citation type="journal article" date="1990" name="Gene">
        <title>The arc operon for anaerobic arginine catabolism in Pseudomonas aeruginosa contains an additional gene, arcD, encoding a membrane protein.</title>
        <authorList>
            <person name="Luethi E."/>
            <person name="Baur H."/>
            <person name="Gamper M."/>
            <person name="Brunner F."/>
            <person name="Villeval D."/>
            <person name="Mercenier A."/>
            <person name="Haas D."/>
        </authorList>
    </citation>
    <scope>NUCLEOTIDE SEQUENCE [GENOMIC DNA]</scope>
    <scope>DISRUPTION PHENOTYPE</scope>
    <source>
        <strain>ATCC 15692 / DSM 22644 / CIP 104116 / JCM 14847 / LMG 12228 / 1C / PRS 101 / PAO1</strain>
    </source>
</reference>
<reference key="2">
    <citation type="journal article" date="2000" name="Nature">
        <title>Complete genome sequence of Pseudomonas aeruginosa PAO1, an opportunistic pathogen.</title>
        <authorList>
            <person name="Stover C.K."/>
            <person name="Pham X.-Q.T."/>
            <person name="Erwin A.L."/>
            <person name="Mizoguchi S.D."/>
            <person name="Warrener P."/>
            <person name="Hickey M.J."/>
            <person name="Brinkman F.S.L."/>
            <person name="Hufnagle W.O."/>
            <person name="Kowalik D.J."/>
            <person name="Lagrou M."/>
            <person name="Garber R.L."/>
            <person name="Goltry L."/>
            <person name="Tolentino E."/>
            <person name="Westbrock-Wadman S."/>
            <person name="Yuan Y."/>
            <person name="Brody L.L."/>
            <person name="Coulter S.N."/>
            <person name="Folger K.R."/>
            <person name="Kas A."/>
            <person name="Larbig K."/>
            <person name="Lim R.M."/>
            <person name="Smith K.A."/>
            <person name="Spencer D.H."/>
            <person name="Wong G.K.-S."/>
            <person name="Wu Z."/>
            <person name="Paulsen I.T."/>
            <person name="Reizer J."/>
            <person name="Saier M.H. Jr."/>
            <person name="Hancock R.E.W."/>
            <person name="Lory S."/>
            <person name="Olson M.V."/>
        </authorList>
    </citation>
    <scope>NUCLEOTIDE SEQUENCE [LARGE SCALE GENOMIC DNA]</scope>
    <source>
        <strain>ATCC 15692 / DSM 22644 / CIP 104116 / JCM 14847 / LMG 12228 / 1C / PRS 101 / PAO1</strain>
    </source>
</reference>
<reference key="3">
    <citation type="journal article" date="1992" name="J. Bacteriol.">
        <title>arcD, the first gene of the arc operon for anaerobic arginine catabolism in Pseudomonas aeruginosa, encodes an arginine-ornithine exchanger.</title>
        <authorList>
            <person name="Verhoogt H.J."/>
            <person name="Smit H."/>
            <person name="Abee T."/>
            <person name="Gamper M."/>
            <person name="Driessen A.J."/>
            <person name="Haas D."/>
            <person name="Konings W.N."/>
        </authorList>
    </citation>
    <scope>FUNCTION</scope>
    <scope>CATALYTIC ACTIVITY</scope>
    <scope>SUBCELLULAR LOCATION</scope>
</reference>
<reference key="4">
    <citation type="journal article" date="1993" name="J. Biol. Chem.">
        <title>Characterization of the arcD arginine:ornithine exchanger of Pseudomonas aeruginosa. Localization in the cytoplasmic membrane and a topological model.</title>
        <authorList>
            <person name="Bourdineaud J.P."/>
            <person name="Heierli D."/>
            <person name="Gamper M."/>
            <person name="Verhoogt H.J."/>
            <person name="Driessen A.J."/>
            <person name="Konings W.N."/>
            <person name="Lazdunski C."/>
            <person name="Haas D."/>
        </authorList>
    </citation>
    <scope>FUNCTION</scope>
    <scope>CATALYTIC ACTIVITY</scope>
    <scope>SUBCELLULAR LOCATION</scope>
    <scope>TOPOLOGY</scope>
    <source>
        <strain>ATCC 15692 / DSM 22644 / CIP 104116 / JCM 14847 / LMG 12228 / 1C / PRS 101 / PAO1</strain>
    </source>
</reference>
<name>ARCD_PSEAE</name>
<comment type="function">
    <text evidence="2 4">Catalyzes electroneutral exchange between arginine and ornithine to allow high-efficiency energy conversion in the arginine deiminase pathway (PubMed:1311296, PubMed:8449902). Also mediates the proton motive force-driven uptake of arginine and ornithine, but the exchange is several orders of magnitude faster than the proton motive force-driven transport (PubMed:1311296).</text>
</comment>
<comment type="catalytic activity">
    <reaction evidence="2 4">
        <text>L-ornithine(in) + L-arginine(out) = L-ornithine(out) + L-arginine(in)</text>
        <dbReference type="Rhea" id="RHEA:34991"/>
        <dbReference type="ChEBI" id="CHEBI:32682"/>
        <dbReference type="ChEBI" id="CHEBI:46911"/>
    </reaction>
    <physiologicalReaction direction="left-to-right" evidence="8 9">
        <dbReference type="Rhea" id="RHEA:34992"/>
    </physiologicalReaction>
</comment>
<comment type="subcellular location">
    <subcellularLocation>
        <location evidence="2 4">Cell inner membrane</location>
        <topology evidence="4">Multi-pass membrane protein</topology>
    </subcellularLocation>
</comment>
<comment type="disruption phenotype">
    <text evidence="3">Mutant is unable to utilize extracellular arginine as an energy source under oxygen-limiting or anaerobic conditions.</text>
</comment>
<comment type="similarity">
    <text evidence="7">Belongs to the amino acid-polyamine-organocation (APC) superfamily. Basic amino acid/polyamine antiporter (APA) (TC 2.A.3.2) family.</text>
</comment>
<dbReference type="EMBL" id="M33223">
    <property type="protein sequence ID" value="AAA25719.1"/>
    <property type="molecule type" value="Genomic_DNA"/>
</dbReference>
<dbReference type="EMBL" id="AE004091">
    <property type="protein sequence ID" value="AAG08555.1"/>
    <property type="molecule type" value="Genomic_DNA"/>
</dbReference>
<dbReference type="PIR" id="JH0110">
    <property type="entry name" value="JH0110"/>
</dbReference>
<dbReference type="RefSeq" id="NP_253857.1">
    <property type="nucleotide sequence ID" value="NC_002516.2"/>
</dbReference>
<dbReference type="RefSeq" id="WP_003123669.1">
    <property type="nucleotide sequence ID" value="NZ_QZGE01000002.1"/>
</dbReference>
<dbReference type="SMR" id="P18275"/>
<dbReference type="FunCoup" id="P18275">
    <property type="interactions" value="78"/>
</dbReference>
<dbReference type="STRING" id="208964.PA5170"/>
<dbReference type="TCDB" id="2.A.3.2.3">
    <property type="family name" value="the amino acid-polyamine-organocation (apc) family"/>
</dbReference>
<dbReference type="PaxDb" id="208964-PA5170"/>
<dbReference type="GeneID" id="881800"/>
<dbReference type="KEGG" id="pae:PA5170"/>
<dbReference type="PATRIC" id="fig|208964.12.peg.5418"/>
<dbReference type="PseudoCAP" id="PA5170"/>
<dbReference type="HOGENOM" id="CLU_007946_1_2_6"/>
<dbReference type="InParanoid" id="P18275"/>
<dbReference type="OrthoDB" id="3185104at2"/>
<dbReference type="PhylomeDB" id="P18275"/>
<dbReference type="BioCyc" id="PAER208964:G1FZ6-5287-MONOMER"/>
<dbReference type="Proteomes" id="UP000002438">
    <property type="component" value="Chromosome"/>
</dbReference>
<dbReference type="GO" id="GO:0005886">
    <property type="term" value="C:plasma membrane"/>
    <property type="evidence" value="ECO:0007669"/>
    <property type="project" value="UniProtKB-SubCell"/>
</dbReference>
<dbReference type="GO" id="GO:0043858">
    <property type="term" value="F:arginine:ornithine antiporter activity"/>
    <property type="evidence" value="ECO:0000315"/>
    <property type="project" value="PseudoCAP"/>
</dbReference>
<dbReference type="GO" id="GO:0015293">
    <property type="term" value="F:symporter activity"/>
    <property type="evidence" value="ECO:0007669"/>
    <property type="project" value="UniProtKB-KW"/>
</dbReference>
<dbReference type="GO" id="GO:0019546">
    <property type="term" value="P:arginine deiminase pathway"/>
    <property type="evidence" value="ECO:0000315"/>
    <property type="project" value="PseudoCAP"/>
</dbReference>
<dbReference type="GO" id="GO:1903826">
    <property type="term" value="P:L-arginine transmembrane transport"/>
    <property type="evidence" value="ECO:0007669"/>
    <property type="project" value="InterPro"/>
</dbReference>
<dbReference type="FunFam" id="1.20.1740.10:FF:000098">
    <property type="entry name" value="Arginine/ornithine antiporter"/>
    <property type="match status" value="1"/>
</dbReference>
<dbReference type="Gene3D" id="1.20.1740.10">
    <property type="entry name" value="Amino acid/polyamine transporter I"/>
    <property type="match status" value="1"/>
</dbReference>
<dbReference type="InterPro" id="IPR002293">
    <property type="entry name" value="AA/rel_permease1"/>
</dbReference>
<dbReference type="InterPro" id="IPR004754">
    <property type="entry name" value="Amino_acid_antiprt"/>
</dbReference>
<dbReference type="InterPro" id="IPR050367">
    <property type="entry name" value="APC_superfamily"/>
</dbReference>
<dbReference type="InterPro" id="IPR022461">
    <property type="entry name" value="Arg/Orn_antiprt_ArcD"/>
</dbReference>
<dbReference type="NCBIfam" id="TIGR00905">
    <property type="entry name" value="2A0302"/>
    <property type="match status" value="1"/>
</dbReference>
<dbReference type="NCBIfam" id="TIGR03810">
    <property type="entry name" value="arg_ornith_anti"/>
    <property type="match status" value="1"/>
</dbReference>
<dbReference type="PANTHER" id="PTHR42770">
    <property type="entry name" value="AMINO ACID TRANSPORTER-RELATED"/>
    <property type="match status" value="1"/>
</dbReference>
<dbReference type="PANTHER" id="PTHR42770:SF4">
    <property type="entry name" value="ARGININE_ORNITHINE ANTIPORTER-RELATED"/>
    <property type="match status" value="1"/>
</dbReference>
<dbReference type="Pfam" id="PF13520">
    <property type="entry name" value="AA_permease_2"/>
    <property type="match status" value="1"/>
</dbReference>
<dbReference type="PIRSF" id="PIRSF006060">
    <property type="entry name" value="AA_transporter"/>
    <property type="match status" value="1"/>
</dbReference>
<organism>
    <name type="scientific">Pseudomonas aeruginosa (strain ATCC 15692 / DSM 22644 / CIP 104116 / JCM 14847 / LMG 12228 / 1C / PRS 101 / PAO1)</name>
    <dbReference type="NCBI Taxonomy" id="208964"/>
    <lineage>
        <taxon>Bacteria</taxon>
        <taxon>Pseudomonadati</taxon>
        <taxon>Pseudomonadota</taxon>
        <taxon>Gammaproteobacteria</taxon>
        <taxon>Pseudomonadales</taxon>
        <taxon>Pseudomonadaceae</taxon>
        <taxon>Pseudomonas</taxon>
    </lineage>
</organism>
<feature type="chain" id="PRO_0000054239" description="Arginine/ornithine antiporter">
    <location>
        <begin position="1"/>
        <end position="482"/>
    </location>
</feature>
<feature type="topological domain" description="Cytoplasmic" evidence="4">
    <location>
        <begin position="1"/>
        <end position="10"/>
    </location>
</feature>
<feature type="transmembrane region" description="Helical" evidence="1">
    <location>
        <begin position="11"/>
        <end position="31"/>
    </location>
</feature>
<feature type="topological domain" description="Periplasmic" evidence="9">
    <location>
        <begin position="32"/>
        <end position="40"/>
    </location>
</feature>
<feature type="transmembrane region" description="Helical" evidence="1">
    <location>
        <begin position="41"/>
        <end position="61"/>
    </location>
</feature>
<feature type="topological domain" description="Cytoplasmic" evidence="9">
    <location>
        <begin position="62"/>
        <end position="100"/>
    </location>
</feature>
<feature type="transmembrane region" description="Helical" evidence="1">
    <location>
        <begin position="101"/>
        <end position="121"/>
    </location>
</feature>
<feature type="topological domain" description="Periplasmic" evidence="9">
    <location>
        <begin position="122"/>
        <end position="124"/>
    </location>
</feature>
<feature type="transmembrane region" description="Helical" evidence="1">
    <location>
        <begin position="125"/>
        <end position="145"/>
    </location>
</feature>
<feature type="topological domain" description="Cytoplasmic" evidence="9">
    <location>
        <begin position="146"/>
        <end position="156"/>
    </location>
</feature>
<feature type="transmembrane region" description="Helical" evidence="1">
    <location>
        <begin position="157"/>
        <end position="177"/>
    </location>
</feature>
<feature type="topological domain" description="Periplasmic" evidence="9">
    <location>
        <begin position="178"/>
        <end position="202"/>
    </location>
</feature>
<feature type="transmembrane region" description="Helical" evidence="1">
    <location>
        <begin position="203"/>
        <end position="223"/>
    </location>
</feature>
<feature type="topological domain" description="Cytoplasmic" evidence="9">
    <location>
        <begin position="224"/>
        <end position="235"/>
    </location>
</feature>
<feature type="transmembrane region" description="Helical" evidence="1">
    <location>
        <begin position="236"/>
        <end position="256"/>
    </location>
</feature>
<feature type="topological domain" description="Periplasmic" evidence="9">
    <location>
        <begin position="257"/>
        <end position="283"/>
    </location>
</feature>
<feature type="transmembrane region" description="Helical" evidence="1">
    <location>
        <begin position="284"/>
        <end position="304"/>
    </location>
</feature>
<feature type="topological domain" description="Cytoplasmic" evidence="9">
    <location>
        <begin position="305"/>
        <end position="333"/>
    </location>
</feature>
<feature type="transmembrane region" description="Helical" evidence="1">
    <location>
        <begin position="334"/>
        <end position="354"/>
    </location>
</feature>
<feature type="topological domain" description="Periplasmic" evidence="9">
    <location>
        <begin position="355"/>
        <end position="365"/>
    </location>
</feature>
<feature type="transmembrane region" description="Helical" evidence="1">
    <location>
        <begin position="366"/>
        <end position="386"/>
    </location>
</feature>
<feature type="topological domain" description="Cytoplasmic" evidence="9">
    <location>
        <begin position="387"/>
        <end position="403"/>
    </location>
</feature>
<feature type="transmembrane region" description="Helical" evidence="1">
    <location>
        <begin position="404"/>
        <end position="424"/>
    </location>
</feature>
<feature type="topological domain" description="Periplasmic" evidence="9">
    <location>
        <position position="425"/>
    </location>
</feature>
<feature type="transmembrane region" description="Helical" evidence="1">
    <location>
        <begin position="426"/>
        <end position="446"/>
    </location>
</feature>
<feature type="topological domain" description="Cytoplasmic" evidence="9">
    <location>
        <begin position="447"/>
        <end position="458"/>
    </location>
</feature>
<feature type="transmembrane region" description="Helical" evidence="1">
    <location>
        <begin position="459"/>
        <end position="479"/>
    </location>
</feature>
<feature type="topological domain" description="Periplasmic" evidence="4">
    <location>
        <begin position="480"/>
        <end position="482"/>
    </location>
</feature>
<protein>
    <recommendedName>
        <fullName evidence="6">Arginine/ornithine antiporter</fullName>
    </recommendedName>
    <alternativeName>
        <fullName evidence="5">Arginine-ornithine exchanger</fullName>
    </alternativeName>
</protein>
<proteinExistence type="evidence at protein level"/>
<evidence type="ECO:0000255" key="1"/>
<evidence type="ECO:0000269" key="2">
    <source>
    </source>
</evidence>
<evidence type="ECO:0000269" key="3">
    <source>
    </source>
</evidence>
<evidence type="ECO:0000269" key="4">
    <source>
    </source>
</evidence>
<evidence type="ECO:0000303" key="5">
    <source>
    </source>
</evidence>
<evidence type="ECO:0000303" key="6">
    <source>
    </source>
</evidence>
<evidence type="ECO:0000305" key="7"/>
<evidence type="ECO:0000305" key="8">
    <source>
    </source>
</evidence>
<evidence type="ECO:0000305" key="9">
    <source>
    </source>
</evidence>
<sequence>MSQESSQKLRLGALTALVVGSMIGGGIFSLPQNMAASADVGAVLIGWAITAVGMLTLAFVFQTLANRKPELDGGVYAYAKAGFGDYMGFSSAWGYWISAWLGNVGYFVLLFSTLGYFFPIFGKGDTVAAIVCASVLLWALHFLVLRGIKEAAFINTVTTVAKVVPLFLFILICLFAFKLDIFTADIWGKSNPDLGSVMNQVRNMMLVTVWVFIGIEGASIFSSRAEKRSDVGKATVIGFITVLLLLVLVNVLSMGVMTQPELAKLQNPSMALVLEHVVGHWGAVLISVGLLISLLGALLSWVLLCAEIMFAAAKDHTMPEFLRRENANQVPANALWLTNICVQVFLVVVFFTSGDPDGMDPYTKMLLLATSMILIPYFWSAAYGLLLTLKGETYENDARERSKDLVIAGIAVAYAVWLLYAGGLKYLLLSALLYAPGAILFAKAKHEVGQPIFTGIEKLIFAAVVIGALVAAYGLYDGFLTL</sequence>
<gene>
    <name evidence="6" type="primary">arcD</name>
    <name type="ordered locus">PA5170</name>
</gene>
<accession>P18275</accession>